<sequence length="466" mass="50526">MSIATVAQAKDVRGLNLVAAHSHITGLGLEPNSLTPKENAQGMVGQVKARRAAAVVLQMIKDGKIAGRSVLLAGPPSTGKTAIAMGISQSLGSDVPFTSLAGSEIYSLELSKTEALNQAFRKSIGVRIKETTDIIEGEVVEIQIDRSLSGGHKQGKLTIKTTDMETIYDLGHKMIDSLSNEKVTAGDVISIDKASGRITKLGRSFARARDYDALGADTKFVQCPEGELQQRKEVIHTVSLHEIDVINSRSQGFLALFSGDTGEIRPEVREQINTKVAEWKEEGKAEIVPGVLFIDEVHMLDMECFSFINRALEDDMAPIVIMATNRGQSTTRGTDYKSPHGLPVDLLDRVIIIPTSPYSPDEVKQILQIRANEEEVELSPEALEILTSIGADTSLRYGSNLISVSHMLAQKRKASSVGLEDVKRAYSLFLDTARSVQFLSSSNNYVGEDGTAKLGEREKDAMDTSA</sequence>
<organism>
    <name type="scientific">Yarrowia lipolytica (strain CLIB 122 / E 150)</name>
    <name type="common">Yeast</name>
    <name type="synonym">Candida lipolytica</name>
    <dbReference type="NCBI Taxonomy" id="284591"/>
    <lineage>
        <taxon>Eukaryota</taxon>
        <taxon>Fungi</taxon>
        <taxon>Dikarya</taxon>
        <taxon>Ascomycota</taxon>
        <taxon>Saccharomycotina</taxon>
        <taxon>Dipodascomycetes</taxon>
        <taxon>Dipodascales</taxon>
        <taxon>Dipodascales incertae sedis</taxon>
        <taxon>Yarrowia</taxon>
    </lineage>
</organism>
<proteinExistence type="inferred from homology"/>
<keyword id="KW-0010">Activator</keyword>
<keyword id="KW-0067">ATP-binding</keyword>
<keyword id="KW-0156">Chromatin regulator</keyword>
<keyword id="KW-0227">DNA damage</keyword>
<keyword id="KW-0234">DNA repair</keyword>
<keyword id="KW-0347">Helicase</keyword>
<keyword id="KW-0378">Hydrolase</keyword>
<keyword id="KW-0547">Nucleotide-binding</keyword>
<keyword id="KW-0539">Nucleus</keyword>
<keyword id="KW-1185">Reference proteome</keyword>
<keyword id="KW-0698">rRNA processing</keyword>
<keyword id="KW-0804">Transcription</keyword>
<keyword id="KW-0805">Transcription regulation</keyword>
<gene>
    <name type="primary">RVB2</name>
    <name type="ordered locus">YALI0E31449g</name>
</gene>
<accession>Q6C3X6</accession>
<evidence type="ECO:0000250" key="1"/>
<evidence type="ECO:0000305" key="2"/>
<protein>
    <recommendedName>
        <fullName>RuvB-like helicase 2</fullName>
        <ecNumber>3.6.4.12</ecNumber>
    </recommendedName>
</protein>
<dbReference type="EC" id="3.6.4.12"/>
<dbReference type="EMBL" id="CR382131">
    <property type="protein sequence ID" value="CAG80240.2"/>
    <property type="molecule type" value="Genomic_DNA"/>
</dbReference>
<dbReference type="RefSeq" id="XP_504636.2">
    <property type="nucleotide sequence ID" value="XM_504636.2"/>
</dbReference>
<dbReference type="SMR" id="Q6C3X6"/>
<dbReference type="FunCoup" id="Q6C3X6">
    <property type="interactions" value="1536"/>
</dbReference>
<dbReference type="STRING" id="284591.Q6C3X6"/>
<dbReference type="EnsemblFungi" id="CAG80240">
    <property type="protein sequence ID" value="CAG80240"/>
    <property type="gene ID" value="YALI0_E31449g"/>
</dbReference>
<dbReference type="KEGG" id="yli:2911470"/>
<dbReference type="VEuPathDB" id="FungiDB:YALI0_E31449g"/>
<dbReference type="HOGENOM" id="CLU_028311_4_0_1"/>
<dbReference type="InParanoid" id="Q6C3X6"/>
<dbReference type="OMA" id="IINTEPY"/>
<dbReference type="OrthoDB" id="110309at4891"/>
<dbReference type="Proteomes" id="UP000001300">
    <property type="component" value="Chromosome E"/>
</dbReference>
<dbReference type="GO" id="GO:0031011">
    <property type="term" value="C:Ino80 complex"/>
    <property type="evidence" value="ECO:0000318"/>
    <property type="project" value="GO_Central"/>
</dbReference>
<dbReference type="GO" id="GO:0035267">
    <property type="term" value="C:NuA4 histone acetyltransferase complex"/>
    <property type="evidence" value="ECO:0000318"/>
    <property type="project" value="GO_Central"/>
</dbReference>
<dbReference type="GO" id="GO:0097255">
    <property type="term" value="C:R2TP complex"/>
    <property type="evidence" value="ECO:0000318"/>
    <property type="project" value="GO_Central"/>
</dbReference>
<dbReference type="GO" id="GO:0000812">
    <property type="term" value="C:Swr1 complex"/>
    <property type="evidence" value="ECO:0000318"/>
    <property type="project" value="GO_Central"/>
</dbReference>
<dbReference type="GO" id="GO:0005524">
    <property type="term" value="F:ATP binding"/>
    <property type="evidence" value="ECO:0007669"/>
    <property type="project" value="UniProtKB-KW"/>
</dbReference>
<dbReference type="GO" id="GO:0016887">
    <property type="term" value="F:ATP hydrolysis activity"/>
    <property type="evidence" value="ECO:0007669"/>
    <property type="project" value="InterPro"/>
</dbReference>
<dbReference type="GO" id="GO:0003678">
    <property type="term" value="F:DNA helicase activity"/>
    <property type="evidence" value="ECO:0000318"/>
    <property type="project" value="GO_Central"/>
</dbReference>
<dbReference type="GO" id="GO:0000492">
    <property type="term" value="P:box C/D snoRNP assembly"/>
    <property type="evidence" value="ECO:0000318"/>
    <property type="project" value="GO_Central"/>
</dbReference>
<dbReference type="GO" id="GO:0006338">
    <property type="term" value="P:chromatin remodeling"/>
    <property type="evidence" value="ECO:0000318"/>
    <property type="project" value="GO_Central"/>
</dbReference>
<dbReference type="GO" id="GO:0006281">
    <property type="term" value="P:DNA repair"/>
    <property type="evidence" value="ECO:0007669"/>
    <property type="project" value="UniProtKB-KW"/>
</dbReference>
<dbReference type="GO" id="GO:0006357">
    <property type="term" value="P:regulation of transcription by RNA polymerase II"/>
    <property type="evidence" value="ECO:0000318"/>
    <property type="project" value="GO_Central"/>
</dbReference>
<dbReference type="GO" id="GO:0006364">
    <property type="term" value="P:rRNA processing"/>
    <property type="evidence" value="ECO:0007669"/>
    <property type="project" value="UniProtKB-KW"/>
</dbReference>
<dbReference type="FunFam" id="3.40.50.300:FF:002221">
    <property type="entry name" value="RuvB-like 2"/>
    <property type="match status" value="2"/>
</dbReference>
<dbReference type="FunFam" id="1.10.8.60:FF:000010">
    <property type="entry name" value="RuvB-like helicase"/>
    <property type="match status" value="1"/>
</dbReference>
<dbReference type="FunFam" id="2.40.50.360:FF:000002">
    <property type="entry name" value="RuvB-like helicase"/>
    <property type="match status" value="1"/>
</dbReference>
<dbReference type="Gene3D" id="1.10.8.60">
    <property type="match status" value="1"/>
</dbReference>
<dbReference type="Gene3D" id="3.40.50.300">
    <property type="entry name" value="P-loop containing nucleotide triphosphate hydrolases"/>
    <property type="match status" value="1"/>
</dbReference>
<dbReference type="Gene3D" id="2.40.50.360">
    <property type="entry name" value="RuvB-like helicase, domain II"/>
    <property type="match status" value="1"/>
</dbReference>
<dbReference type="InterPro" id="IPR003593">
    <property type="entry name" value="AAA+_ATPase"/>
</dbReference>
<dbReference type="InterPro" id="IPR027417">
    <property type="entry name" value="P-loop_NTPase"/>
</dbReference>
<dbReference type="InterPro" id="IPR027238">
    <property type="entry name" value="RuvB-like"/>
</dbReference>
<dbReference type="InterPro" id="IPR041048">
    <property type="entry name" value="RuvB-like_C"/>
</dbReference>
<dbReference type="InterPro" id="IPR042487">
    <property type="entry name" value="RuvBL1/2_DNA/RNA_bd_dom"/>
</dbReference>
<dbReference type="InterPro" id="IPR010339">
    <property type="entry name" value="TIP49_P-loop"/>
</dbReference>
<dbReference type="PANTHER" id="PTHR11093">
    <property type="entry name" value="RUVB-RELATED REPTIN AND PONTIN"/>
    <property type="match status" value="1"/>
</dbReference>
<dbReference type="Pfam" id="PF06068">
    <property type="entry name" value="TIP49"/>
    <property type="match status" value="1"/>
</dbReference>
<dbReference type="Pfam" id="PF17856">
    <property type="entry name" value="TIP49_C"/>
    <property type="match status" value="1"/>
</dbReference>
<dbReference type="SMART" id="SM00382">
    <property type="entry name" value="AAA"/>
    <property type="match status" value="1"/>
</dbReference>
<dbReference type="SUPFAM" id="SSF52540">
    <property type="entry name" value="P-loop containing nucleoside triphosphate hydrolases"/>
    <property type="match status" value="1"/>
</dbReference>
<feature type="chain" id="PRO_0000165674" description="RuvB-like helicase 2">
    <location>
        <begin position="1"/>
        <end position="466"/>
    </location>
</feature>
<feature type="binding site" evidence="1">
    <location>
        <begin position="74"/>
        <end position="81"/>
    </location>
    <ligand>
        <name>ATP</name>
        <dbReference type="ChEBI" id="CHEBI:30616"/>
    </ligand>
</feature>
<reference key="1">
    <citation type="journal article" date="2004" name="Nature">
        <title>Genome evolution in yeasts.</title>
        <authorList>
            <person name="Dujon B."/>
            <person name="Sherman D."/>
            <person name="Fischer G."/>
            <person name="Durrens P."/>
            <person name="Casaregola S."/>
            <person name="Lafontaine I."/>
            <person name="de Montigny J."/>
            <person name="Marck C."/>
            <person name="Neuveglise C."/>
            <person name="Talla E."/>
            <person name="Goffard N."/>
            <person name="Frangeul L."/>
            <person name="Aigle M."/>
            <person name="Anthouard V."/>
            <person name="Babour A."/>
            <person name="Barbe V."/>
            <person name="Barnay S."/>
            <person name="Blanchin S."/>
            <person name="Beckerich J.-M."/>
            <person name="Beyne E."/>
            <person name="Bleykasten C."/>
            <person name="Boisrame A."/>
            <person name="Boyer J."/>
            <person name="Cattolico L."/>
            <person name="Confanioleri F."/>
            <person name="de Daruvar A."/>
            <person name="Despons L."/>
            <person name="Fabre E."/>
            <person name="Fairhead C."/>
            <person name="Ferry-Dumazet H."/>
            <person name="Groppi A."/>
            <person name="Hantraye F."/>
            <person name="Hennequin C."/>
            <person name="Jauniaux N."/>
            <person name="Joyet P."/>
            <person name="Kachouri R."/>
            <person name="Kerrest A."/>
            <person name="Koszul R."/>
            <person name="Lemaire M."/>
            <person name="Lesur I."/>
            <person name="Ma L."/>
            <person name="Muller H."/>
            <person name="Nicaud J.-M."/>
            <person name="Nikolski M."/>
            <person name="Oztas S."/>
            <person name="Ozier-Kalogeropoulos O."/>
            <person name="Pellenz S."/>
            <person name="Potier S."/>
            <person name="Richard G.-F."/>
            <person name="Straub M.-L."/>
            <person name="Suleau A."/>
            <person name="Swennen D."/>
            <person name="Tekaia F."/>
            <person name="Wesolowski-Louvel M."/>
            <person name="Westhof E."/>
            <person name="Wirth B."/>
            <person name="Zeniou-Meyer M."/>
            <person name="Zivanovic Y."/>
            <person name="Bolotin-Fukuhara M."/>
            <person name="Thierry A."/>
            <person name="Bouchier C."/>
            <person name="Caudron B."/>
            <person name="Scarpelli C."/>
            <person name="Gaillardin C."/>
            <person name="Weissenbach J."/>
            <person name="Wincker P."/>
            <person name="Souciet J.-L."/>
        </authorList>
    </citation>
    <scope>NUCLEOTIDE SEQUENCE [LARGE SCALE GENOMIC DNA]</scope>
    <source>
        <strain>CLIB 122 / E 150</strain>
    </source>
</reference>
<comment type="function">
    <text evidence="1">DNA helicase which participates in several chromatin remodeling complexes, including the SWR1 and the INO80 complexes. The SWR1 complex mediates the ATP-dependent exchange of histone H2A for the H2A variant HZT1 leading to transcriptional regulation of selected genes by chromatin remodeling. The INO80 complex remodels chromatin by shifting nucleosomes and is involved in DNA repair. Also involved in pre-rRNA processing (By similarity).</text>
</comment>
<comment type="catalytic activity">
    <reaction>
        <text>ATP + H2O = ADP + phosphate + H(+)</text>
        <dbReference type="Rhea" id="RHEA:13065"/>
        <dbReference type="ChEBI" id="CHEBI:15377"/>
        <dbReference type="ChEBI" id="CHEBI:15378"/>
        <dbReference type="ChEBI" id="CHEBI:30616"/>
        <dbReference type="ChEBI" id="CHEBI:43474"/>
        <dbReference type="ChEBI" id="CHEBI:456216"/>
        <dbReference type="EC" id="3.6.4.12"/>
    </reaction>
</comment>
<comment type="subunit">
    <text evidence="1">May form heterododecamers with RVB1. Component of the SWR1 chromatin remodeling complex, the INO80 chromatin remodeling complex, and of the R2TP complex (By similarity).</text>
</comment>
<comment type="subcellular location">
    <subcellularLocation>
        <location evidence="1">Nucleus</location>
    </subcellularLocation>
</comment>
<comment type="similarity">
    <text evidence="2">Belongs to the RuvB family.</text>
</comment>
<name>RUVB2_YARLI</name>